<dbReference type="EC" id="5.3.99.11"/>
<dbReference type="EMBL" id="BA000004">
    <property type="protein sequence ID" value="BAB06034.1"/>
    <property type="molecule type" value="Genomic_DNA"/>
</dbReference>
<dbReference type="PIR" id="C83939">
    <property type="entry name" value="C83939"/>
</dbReference>
<dbReference type="RefSeq" id="WP_010898471.1">
    <property type="nucleotide sequence ID" value="NC_002570.2"/>
</dbReference>
<dbReference type="SMR" id="Q9KAH2"/>
<dbReference type="STRING" id="272558.gene:10728213"/>
<dbReference type="KEGG" id="bha:BH2315"/>
<dbReference type="eggNOG" id="COG1082">
    <property type="taxonomic scope" value="Bacteria"/>
</dbReference>
<dbReference type="HOGENOM" id="CLU_035063_3_0_9"/>
<dbReference type="OrthoDB" id="9782626at2"/>
<dbReference type="UniPathway" id="UPA00076"/>
<dbReference type="Proteomes" id="UP000001258">
    <property type="component" value="Chromosome"/>
</dbReference>
<dbReference type="GO" id="GO:0016853">
    <property type="term" value="F:isomerase activity"/>
    <property type="evidence" value="ECO:0007669"/>
    <property type="project" value="UniProtKB-KW"/>
</dbReference>
<dbReference type="GO" id="GO:0046872">
    <property type="term" value="F:metal ion binding"/>
    <property type="evidence" value="ECO:0007669"/>
    <property type="project" value="UniProtKB-KW"/>
</dbReference>
<dbReference type="Gene3D" id="3.20.20.150">
    <property type="entry name" value="Divalent-metal-dependent TIM barrel enzymes"/>
    <property type="match status" value="1"/>
</dbReference>
<dbReference type="InterPro" id="IPR050312">
    <property type="entry name" value="IolE/XylAMocC-like"/>
</dbReference>
<dbReference type="InterPro" id="IPR036237">
    <property type="entry name" value="Xyl_isomerase-like_sf"/>
</dbReference>
<dbReference type="InterPro" id="IPR013022">
    <property type="entry name" value="Xyl_isomerase-like_TIM-brl"/>
</dbReference>
<dbReference type="PANTHER" id="PTHR12110">
    <property type="entry name" value="HYDROXYPYRUVATE ISOMERASE"/>
    <property type="match status" value="1"/>
</dbReference>
<dbReference type="PANTHER" id="PTHR12110:SF21">
    <property type="entry name" value="XYLOSE ISOMERASE-LIKE TIM BARREL DOMAIN-CONTAINING PROTEIN"/>
    <property type="match status" value="1"/>
</dbReference>
<dbReference type="Pfam" id="PF01261">
    <property type="entry name" value="AP_endonuc_2"/>
    <property type="match status" value="1"/>
</dbReference>
<dbReference type="SUPFAM" id="SSF51658">
    <property type="entry name" value="Xylose isomerase-like"/>
    <property type="match status" value="1"/>
</dbReference>
<feature type="chain" id="PRO_0000352278" description="Inosose isomerase">
    <location>
        <begin position="1"/>
        <end position="282"/>
    </location>
</feature>
<feature type="binding site" evidence="1">
    <location>
        <position position="142"/>
    </location>
    <ligand>
        <name>a divalent metal cation</name>
        <dbReference type="ChEBI" id="CHEBI:60240"/>
    </ligand>
</feature>
<feature type="binding site" evidence="1">
    <location>
        <position position="174"/>
    </location>
    <ligand>
        <name>a divalent metal cation</name>
        <dbReference type="ChEBI" id="CHEBI:60240"/>
    </ligand>
</feature>
<feature type="binding site" evidence="1">
    <location>
        <position position="200"/>
    </location>
    <ligand>
        <name>a divalent metal cation</name>
        <dbReference type="ChEBI" id="CHEBI:60240"/>
    </ligand>
</feature>
<feature type="binding site" evidence="1">
    <location>
        <position position="246"/>
    </location>
    <ligand>
        <name>a divalent metal cation</name>
        <dbReference type="ChEBI" id="CHEBI:60240"/>
    </ligand>
</feature>
<keyword id="KW-0413">Isomerase</keyword>
<keyword id="KW-0479">Metal-binding</keyword>
<keyword id="KW-1185">Reference proteome</keyword>
<proteinExistence type="inferred from homology"/>
<accession>Q9KAH2</accession>
<reference key="1">
    <citation type="journal article" date="2000" name="Nucleic Acids Res.">
        <title>Complete genome sequence of the alkaliphilic bacterium Bacillus halodurans and genomic sequence comparison with Bacillus subtilis.</title>
        <authorList>
            <person name="Takami H."/>
            <person name="Nakasone K."/>
            <person name="Takaki Y."/>
            <person name="Maeno G."/>
            <person name="Sasaki R."/>
            <person name="Masui N."/>
            <person name="Fuji F."/>
            <person name="Hirama C."/>
            <person name="Nakamura Y."/>
            <person name="Ogasawara N."/>
            <person name="Kuhara S."/>
            <person name="Horikoshi K."/>
        </authorList>
    </citation>
    <scope>NUCLEOTIDE SEQUENCE [LARGE SCALE GENOMIC DNA]</scope>
    <source>
        <strain>ATCC BAA-125 / DSM 18197 / FERM 7344 / JCM 9153 / C-125</strain>
    </source>
</reference>
<protein>
    <recommendedName>
        <fullName>Inosose isomerase</fullName>
        <ecNumber>5.3.99.11</ecNumber>
    </recommendedName>
    <alternativeName>
        <fullName>2-keto-myo-inositol isomerase</fullName>
        <shortName>2KMI isomerase</shortName>
    </alternativeName>
</protein>
<name>IOLI_HALH5</name>
<sequence length="282" mass="32033">MKLCYNQATTLENSNLVKDLEYCEKNGYDYIEIRTMDKLPEYLKDHTLDELKHFFQTNHIKPLALNALVFFNNRDEAGYKEIITEFKGMMETAKALNIPYVVAVPLVTEEKILKSEIKRSCVNVLTELSEIAKPYGVKVALEFIGHPQCTVNTFGQAYEIVEAVGRDNIGLVLDCFHFHAMGSNISDLEKADISKIFILHMDDTEDFPVGFLTDEDRVWPGHGAINLDQMLSILKEKGYSGAVSVELFRPEYYQLSAEEAIKTAKDTTVEVVSKHFTLETTK</sequence>
<gene>
    <name type="primary">iolI</name>
    <name type="ordered locus">BH2315</name>
</gene>
<comment type="function">
    <text evidence="1">Involved in the reversible interconverion of 2-keto-myo-inositol (2KMI, inosose or 2,4,6/3,5-pentahydroxycyclohexanone) to 1-keto-D-chiro-inositol (1KDCI or 2,3,5/4,6-pentahydroxycyclohexanone).</text>
</comment>
<comment type="catalytic activity">
    <reaction>
        <text>scyllo-inosose = scyllo-inosine</text>
        <dbReference type="Rhea" id="RHEA:25776"/>
        <dbReference type="ChEBI" id="CHEBI:17811"/>
        <dbReference type="ChEBI" id="CHEBI:50920"/>
        <dbReference type="EC" id="5.3.99.11"/>
    </reaction>
</comment>
<comment type="cofactor">
    <cofactor evidence="1">
        <name>a divalent metal cation</name>
        <dbReference type="ChEBI" id="CHEBI:60240"/>
    </cofactor>
    <text evidence="1">Binds 1 divalent metal cation per subunit.</text>
</comment>
<comment type="pathway">
    <text>Polyol metabolism; myo-inositol degradation into acetyl-CoA.</text>
</comment>
<comment type="similarity">
    <text evidence="2">Belongs to the IolI family.</text>
</comment>
<organism>
    <name type="scientific">Halalkalibacterium halodurans (strain ATCC BAA-125 / DSM 18197 / FERM 7344 / JCM 9153 / C-125)</name>
    <name type="common">Bacillus halodurans</name>
    <dbReference type="NCBI Taxonomy" id="272558"/>
    <lineage>
        <taxon>Bacteria</taxon>
        <taxon>Bacillati</taxon>
        <taxon>Bacillota</taxon>
        <taxon>Bacilli</taxon>
        <taxon>Bacillales</taxon>
        <taxon>Bacillaceae</taxon>
        <taxon>Halalkalibacterium (ex Joshi et al. 2022)</taxon>
    </lineage>
</organism>
<evidence type="ECO:0000250" key="1"/>
<evidence type="ECO:0000305" key="2"/>